<dbReference type="EC" id="1.-.-.-" evidence="9"/>
<dbReference type="EMBL" id="LC025956">
    <property type="protein sequence ID" value="BAR40285.1"/>
    <property type="molecule type" value="Genomic_DNA"/>
</dbReference>
<dbReference type="SMR" id="A0A0E4FKF7"/>
<dbReference type="GO" id="GO:0000166">
    <property type="term" value="F:nucleotide binding"/>
    <property type="evidence" value="ECO:0007669"/>
    <property type="project" value="UniProtKB-KW"/>
</dbReference>
<dbReference type="GO" id="GO:0016651">
    <property type="term" value="F:oxidoreductase activity, acting on NAD(P)H"/>
    <property type="evidence" value="ECO:0007669"/>
    <property type="project" value="InterPro"/>
</dbReference>
<dbReference type="CDD" id="cd08249">
    <property type="entry name" value="enoyl_reductase_like"/>
    <property type="match status" value="1"/>
</dbReference>
<dbReference type="Gene3D" id="3.90.180.10">
    <property type="entry name" value="Medium-chain alcohol dehydrogenases, catalytic domain"/>
    <property type="match status" value="1"/>
</dbReference>
<dbReference type="Gene3D" id="3.40.50.720">
    <property type="entry name" value="NAD(P)-binding Rossmann-like Domain"/>
    <property type="match status" value="1"/>
</dbReference>
<dbReference type="InterPro" id="IPR013149">
    <property type="entry name" value="ADH-like_C"/>
</dbReference>
<dbReference type="InterPro" id="IPR013154">
    <property type="entry name" value="ADH-like_N"/>
</dbReference>
<dbReference type="InterPro" id="IPR011032">
    <property type="entry name" value="GroES-like_sf"/>
</dbReference>
<dbReference type="InterPro" id="IPR036291">
    <property type="entry name" value="NAD(P)-bd_dom_sf"/>
</dbReference>
<dbReference type="InterPro" id="IPR020843">
    <property type="entry name" value="PKS_ER"/>
</dbReference>
<dbReference type="InterPro" id="IPR047122">
    <property type="entry name" value="Trans-enoyl_RdTase-like"/>
</dbReference>
<dbReference type="PANTHER" id="PTHR45348">
    <property type="entry name" value="HYPOTHETICAL OXIDOREDUCTASE (EUROFUNG)"/>
    <property type="match status" value="1"/>
</dbReference>
<dbReference type="PANTHER" id="PTHR45348:SF1">
    <property type="entry name" value="TRANS-ENOYL REDUCTASE STHE"/>
    <property type="match status" value="1"/>
</dbReference>
<dbReference type="Pfam" id="PF08240">
    <property type="entry name" value="ADH_N"/>
    <property type="match status" value="1"/>
</dbReference>
<dbReference type="Pfam" id="PF00107">
    <property type="entry name" value="ADH_zinc_N"/>
    <property type="match status" value="1"/>
</dbReference>
<dbReference type="SMART" id="SM00829">
    <property type="entry name" value="PKS_ER"/>
    <property type="match status" value="1"/>
</dbReference>
<dbReference type="SUPFAM" id="SSF50129">
    <property type="entry name" value="GroES-like"/>
    <property type="match status" value="1"/>
</dbReference>
<dbReference type="SUPFAM" id="SSF51735">
    <property type="entry name" value="NAD(P)-binding Rossmann-fold domains"/>
    <property type="match status" value="1"/>
</dbReference>
<name>FSA3_FUSSF</name>
<feature type="chain" id="PRO_0000441295" description="Trans-enoyl reductase fsa3">
    <location>
        <begin position="1"/>
        <end position="353"/>
    </location>
</feature>
<feature type="binding site" evidence="1">
    <location>
        <begin position="45"/>
        <end position="48"/>
    </location>
    <ligand>
        <name>NADP(+)</name>
        <dbReference type="ChEBI" id="CHEBI:58349"/>
    </ligand>
</feature>
<feature type="binding site" evidence="2">
    <location>
        <begin position="131"/>
        <end position="138"/>
    </location>
    <ligand>
        <name>substrate</name>
    </ligand>
</feature>
<feature type="binding site" evidence="1">
    <location>
        <begin position="166"/>
        <end position="169"/>
    </location>
    <ligand>
        <name>NADP(+)</name>
        <dbReference type="ChEBI" id="CHEBI:58349"/>
    </ligand>
</feature>
<feature type="binding site" evidence="1">
    <location>
        <begin position="189"/>
        <end position="192"/>
    </location>
    <ligand>
        <name>NADP(+)</name>
        <dbReference type="ChEBI" id="CHEBI:58349"/>
    </ligand>
</feature>
<feature type="binding site" evidence="1">
    <location>
        <position position="207"/>
    </location>
    <ligand>
        <name>NADP(+)</name>
        <dbReference type="ChEBI" id="CHEBI:58349"/>
    </ligand>
</feature>
<feature type="binding site" evidence="1">
    <location>
        <begin position="254"/>
        <end position="255"/>
    </location>
    <ligand>
        <name>NADP(+)</name>
        <dbReference type="ChEBI" id="CHEBI:58349"/>
    </ligand>
</feature>
<feature type="binding site" evidence="2">
    <location>
        <begin position="275"/>
        <end position="279"/>
    </location>
    <ligand>
        <name>substrate</name>
    </ligand>
</feature>
<feature type="binding site" evidence="1">
    <location>
        <begin position="344"/>
        <end position="345"/>
    </location>
    <ligand>
        <name>NADP(+)</name>
        <dbReference type="ChEBI" id="CHEBI:58349"/>
    </ligand>
</feature>
<gene>
    <name evidence="7" type="primary">fsa3</name>
</gene>
<evidence type="ECO:0000250" key="1">
    <source>
        <dbReference type="UniProtKB" id="Q9Y7D0"/>
    </source>
</evidence>
<evidence type="ECO:0000255" key="2"/>
<evidence type="ECO:0000269" key="3">
    <source>
    </source>
</evidence>
<evidence type="ECO:0000269" key="4">
    <source>
    </source>
</evidence>
<evidence type="ECO:0000269" key="5">
    <source>
    </source>
</evidence>
<evidence type="ECO:0000269" key="6">
    <source>
    </source>
</evidence>
<evidence type="ECO:0000303" key="7">
    <source>
    </source>
</evidence>
<evidence type="ECO:0000305" key="8"/>
<evidence type="ECO:0000305" key="9">
    <source>
    </source>
</evidence>
<comment type="function">
    <text evidence="3 4 5 6">Trans-enoyl reductase; part of the gene cluster that mediates the biosynthesis of HIV-1 integrase inhibitor equisetin and of fusarisetin A, both trans-fused decalin-containing tetramic acids showing also antimicrobial activity (PubMed:25770422). The PKS module of fsa1 together with the enoylreductase fsa3 catalyze the formation of the polyketide unit which is then conjugated to L-serine by the condensation domain of the fsa1 NRPS module (PubMed:25770422). Activity of the Dieckmann cyclase domain (RED) results in release of the Dieckmann product intermediate (PubMed:25770422). Diels-Alderase fsa2 is involved in endo-selective Diels-Alder cycloaddition to form the decalin ring, leading to the production of N-desmethylequisetin also called trichosetin (PubMed:25770422, PubMed:28401214, PubMed:29972614, PubMed:34121297). Subsequent N-methylation is carried out by fsa4 to give equisetin (PubMed:25770422). The enzymatic gene responsible for the conversion of equisetin to fusarisetin A has not been identified yet and is probably located outside of the fsa cluster (PubMed:28401214).</text>
</comment>
<comment type="catalytic activity">
    <reaction evidence="9">
        <text>L-serine + 7 malonyl-CoA + acetyl-CoA + 2 S-adenosyl-L-methionine + ATP + 8 NADPH + 11 H(+) = (5S)-3-[(2E,6R,8E,10E,12E)-2,6-dimethyltetradeca-2,8,10,12-tetraenoyl]-5-(hydroxymethyl)pyrrolidine-2,4-dione + AMP + 2 S-adenosyl-L-homocysteine + 7 CO2 + diphosphate + 8 NADP(+) + 8 CoA + 6 H2O</text>
        <dbReference type="Rhea" id="RHEA:67324"/>
        <dbReference type="ChEBI" id="CHEBI:15377"/>
        <dbReference type="ChEBI" id="CHEBI:15378"/>
        <dbReference type="ChEBI" id="CHEBI:16526"/>
        <dbReference type="ChEBI" id="CHEBI:30616"/>
        <dbReference type="ChEBI" id="CHEBI:33019"/>
        <dbReference type="ChEBI" id="CHEBI:33384"/>
        <dbReference type="ChEBI" id="CHEBI:57287"/>
        <dbReference type="ChEBI" id="CHEBI:57288"/>
        <dbReference type="ChEBI" id="CHEBI:57384"/>
        <dbReference type="ChEBI" id="CHEBI:57783"/>
        <dbReference type="ChEBI" id="CHEBI:57856"/>
        <dbReference type="ChEBI" id="CHEBI:58349"/>
        <dbReference type="ChEBI" id="CHEBI:59789"/>
        <dbReference type="ChEBI" id="CHEBI:169938"/>
        <dbReference type="ChEBI" id="CHEBI:456215"/>
    </reaction>
    <physiologicalReaction direction="left-to-right" evidence="9">
        <dbReference type="Rhea" id="RHEA:67325"/>
    </physiologicalReaction>
</comment>
<comment type="pathway">
    <text evidence="3">Mycotoxin biosynthesis.</text>
</comment>
<comment type="subunit">
    <text evidence="1">Monomer.</text>
</comment>
<comment type="disruption phenotype">
    <text evidence="3">Results in the loss of production of equisetin and fusarisetin A (PubMed:25770422).</text>
</comment>
<comment type="similarity">
    <text evidence="8">Belongs to the zinc-containing alcohol dehydrogenase family.</text>
</comment>
<reference key="1">
    <citation type="journal article" date="2015" name="Biochem. Biophys. Res. Commun.">
        <title>A new enzyme involved in the control of the stereochemistry in the decalin formation during equisetin biosynthesis.</title>
        <authorList>
            <person name="Kato N."/>
            <person name="Nogawa T."/>
            <person name="Hirota H."/>
            <person name="Jang J.H."/>
            <person name="Takahashi S."/>
            <person name="Ahn J.S."/>
            <person name="Osada H."/>
        </authorList>
    </citation>
    <scope>NUCLEOTIDE SEQUENCE [GENOMIC DNA]</scope>
    <scope>FUNCTION</scope>
    <scope>DISRUPTION PHENOTYPE</scope>
    <scope>PATHWAY</scope>
</reference>
<reference key="2">
    <citation type="journal article" date="2017" name="Chem. Commun. (Camb.)">
        <title>Chemo-enzymatic synthesis of equisetin.</title>
        <authorList>
            <person name="Li X."/>
            <person name="Zheng Q."/>
            <person name="Yin J."/>
            <person name="Liu W."/>
            <person name="Gao S."/>
        </authorList>
    </citation>
    <scope>FUNCTION</scope>
</reference>
<reference key="3">
    <citation type="journal article" date="2018" name="Angew. Chem. Int. Ed.">
        <title>Control of the stereochemical course of [4+2] cycloaddition during trans-decalin formation by Fsa2-family enzymes.</title>
        <authorList>
            <person name="Kato N."/>
            <person name="Nogawa T."/>
            <person name="Takita R."/>
            <person name="Kinugasa K."/>
            <person name="Kanai M."/>
            <person name="Uchiyama M."/>
            <person name="Osada H."/>
            <person name="Takahashi S."/>
        </authorList>
    </citation>
    <scope>FUNCTION</scope>
</reference>
<reference key="4">
    <citation type="journal article" date="2021" name="Angew. Chem. Int. Ed.">
        <title>Molecular basis for two stereoselective Diels-Alderases that produce decalin skeletons*.</title>
        <authorList>
            <person name="Fujiyama K."/>
            <person name="Kato N."/>
            <person name="Re S."/>
            <person name="Kinugasa K."/>
            <person name="Watanabe K."/>
            <person name="Takita R."/>
            <person name="Nogawa T."/>
            <person name="Hino T."/>
            <person name="Osada H."/>
            <person name="Sugita Y."/>
            <person name="Takahashi S."/>
            <person name="Nagano S."/>
        </authorList>
    </citation>
    <scope>FUNCTION</scope>
</reference>
<protein>
    <recommendedName>
        <fullName evidence="7">Trans-enoyl reductase fsa3</fullName>
        <ecNumber evidence="9">1.-.-.-</ecNumber>
    </recommendedName>
    <alternativeName>
        <fullName evidence="7">Fusarisetin A biosynthesis protein 3</fullName>
    </alternativeName>
</protein>
<accession>A0A0E4FKF7</accession>
<keyword id="KW-0521">NADP</keyword>
<keyword id="KW-0547">Nucleotide-binding</keyword>
<keyword id="KW-0560">Oxidoreductase</keyword>
<sequence length="353" mass="38144">MVQRQQTALVGTDDGGIRLSSTETIPNITGDSVLIKTKAVSVNPVDTKMIGPYVTPGAVAGFDFAGVVEMVGPDATKCDIRVGDRVCTAIMGMNPLDPTVGAFAEYTAAVEWILLKIPPNLSFEEGASLGISFMTTGLALFKSLGLPGNPLSPATEKLPVLVYGGSSATGTAAIQLVKLAGFAPITTCSPRNFELVKSYGASAVFDYNDPDCIRDIKKHTKNNIRYALDCISTTQSMQFCYQAIGRAGGKYTALEPFSEAVARTRKMVKPDWIMGPQMLGKEIRWPEPHWRPANAEMGEFGVYWTAVLRKLLDNNLIRPHAIVVREGGLEKVLDGIEDIRAKKISGKKLVFTL</sequence>
<proteinExistence type="inferred from homology"/>
<organism>
    <name type="scientific">Fusarium sp. (strain FN080326)</name>
    <dbReference type="NCBI Taxonomy" id="1608308"/>
    <lineage>
        <taxon>Eukaryota</taxon>
        <taxon>Fungi</taxon>
        <taxon>Dikarya</taxon>
        <taxon>Ascomycota</taxon>
        <taxon>Pezizomycotina</taxon>
        <taxon>Sordariomycetes</taxon>
        <taxon>Hypocreomycetidae</taxon>
        <taxon>Hypocreales</taxon>
        <taxon>Nectriaceae</taxon>
        <taxon>Fusarium</taxon>
    </lineage>
</organism>